<protein>
    <recommendedName>
        <fullName evidence="1">Glutamyl-tRNA(Gln) amidotransferase subunit A</fullName>
        <shortName evidence="1">Glu-ADT subunit A</shortName>
        <ecNumber evidence="1">6.3.5.7</ecNumber>
    </recommendedName>
</protein>
<name>GATA_JANSC</name>
<accession>Q28T24</accession>
<proteinExistence type="inferred from homology"/>
<dbReference type="EC" id="6.3.5.7" evidence="1"/>
<dbReference type="EMBL" id="CP000264">
    <property type="protein sequence ID" value="ABD54138.1"/>
    <property type="molecule type" value="Genomic_DNA"/>
</dbReference>
<dbReference type="RefSeq" id="WP_011454345.1">
    <property type="nucleotide sequence ID" value="NC_007802.1"/>
</dbReference>
<dbReference type="SMR" id="Q28T24"/>
<dbReference type="STRING" id="290400.Jann_1221"/>
<dbReference type="KEGG" id="jan:Jann_1221"/>
<dbReference type="eggNOG" id="COG0154">
    <property type="taxonomic scope" value="Bacteria"/>
</dbReference>
<dbReference type="HOGENOM" id="CLU_009600_0_3_5"/>
<dbReference type="OrthoDB" id="9811471at2"/>
<dbReference type="Proteomes" id="UP000008326">
    <property type="component" value="Chromosome"/>
</dbReference>
<dbReference type="GO" id="GO:0030956">
    <property type="term" value="C:glutamyl-tRNA(Gln) amidotransferase complex"/>
    <property type="evidence" value="ECO:0007669"/>
    <property type="project" value="InterPro"/>
</dbReference>
<dbReference type="GO" id="GO:0005524">
    <property type="term" value="F:ATP binding"/>
    <property type="evidence" value="ECO:0007669"/>
    <property type="project" value="UniProtKB-KW"/>
</dbReference>
<dbReference type="GO" id="GO:0050567">
    <property type="term" value="F:glutaminyl-tRNA synthase (glutamine-hydrolyzing) activity"/>
    <property type="evidence" value="ECO:0007669"/>
    <property type="project" value="UniProtKB-UniRule"/>
</dbReference>
<dbReference type="GO" id="GO:0006412">
    <property type="term" value="P:translation"/>
    <property type="evidence" value="ECO:0007669"/>
    <property type="project" value="UniProtKB-UniRule"/>
</dbReference>
<dbReference type="Gene3D" id="3.90.1300.10">
    <property type="entry name" value="Amidase signature (AS) domain"/>
    <property type="match status" value="1"/>
</dbReference>
<dbReference type="HAMAP" id="MF_00120">
    <property type="entry name" value="GatA"/>
    <property type="match status" value="1"/>
</dbReference>
<dbReference type="InterPro" id="IPR000120">
    <property type="entry name" value="Amidase"/>
</dbReference>
<dbReference type="InterPro" id="IPR020556">
    <property type="entry name" value="Amidase_CS"/>
</dbReference>
<dbReference type="InterPro" id="IPR023631">
    <property type="entry name" value="Amidase_dom"/>
</dbReference>
<dbReference type="InterPro" id="IPR036928">
    <property type="entry name" value="AS_sf"/>
</dbReference>
<dbReference type="InterPro" id="IPR004412">
    <property type="entry name" value="GatA"/>
</dbReference>
<dbReference type="NCBIfam" id="TIGR00132">
    <property type="entry name" value="gatA"/>
    <property type="match status" value="1"/>
</dbReference>
<dbReference type="PANTHER" id="PTHR11895:SF151">
    <property type="entry name" value="GLUTAMYL-TRNA(GLN) AMIDOTRANSFERASE SUBUNIT A"/>
    <property type="match status" value="1"/>
</dbReference>
<dbReference type="PANTHER" id="PTHR11895">
    <property type="entry name" value="TRANSAMIDASE"/>
    <property type="match status" value="1"/>
</dbReference>
<dbReference type="Pfam" id="PF01425">
    <property type="entry name" value="Amidase"/>
    <property type="match status" value="1"/>
</dbReference>
<dbReference type="SUPFAM" id="SSF75304">
    <property type="entry name" value="Amidase signature (AS) enzymes"/>
    <property type="match status" value="1"/>
</dbReference>
<dbReference type="PROSITE" id="PS00571">
    <property type="entry name" value="AMIDASES"/>
    <property type="match status" value="1"/>
</dbReference>
<feature type="chain" id="PRO_0000241109" description="Glutamyl-tRNA(Gln) amidotransferase subunit A">
    <location>
        <begin position="1"/>
        <end position="494"/>
    </location>
</feature>
<feature type="active site" description="Charge relay system" evidence="1">
    <location>
        <position position="78"/>
    </location>
</feature>
<feature type="active site" description="Charge relay system" evidence="1">
    <location>
        <position position="158"/>
    </location>
</feature>
<feature type="active site" description="Acyl-ester intermediate" evidence="1">
    <location>
        <position position="182"/>
    </location>
</feature>
<comment type="function">
    <text evidence="1">Allows the formation of correctly charged Gln-tRNA(Gln) through the transamidation of misacylated Glu-tRNA(Gln) in organisms which lack glutaminyl-tRNA synthetase. The reaction takes place in the presence of glutamine and ATP through an activated gamma-phospho-Glu-tRNA(Gln).</text>
</comment>
<comment type="catalytic activity">
    <reaction evidence="1">
        <text>L-glutamyl-tRNA(Gln) + L-glutamine + ATP + H2O = L-glutaminyl-tRNA(Gln) + L-glutamate + ADP + phosphate + H(+)</text>
        <dbReference type="Rhea" id="RHEA:17521"/>
        <dbReference type="Rhea" id="RHEA-COMP:9681"/>
        <dbReference type="Rhea" id="RHEA-COMP:9684"/>
        <dbReference type="ChEBI" id="CHEBI:15377"/>
        <dbReference type="ChEBI" id="CHEBI:15378"/>
        <dbReference type="ChEBI" id="CHEBI:29985"/>
        <dbReference type="ChEBI" id="CHEBI:30616"/>
        <dbReference type="ChEBI" id="CHEBI:43474"/>
        <dbReference type="ChEBI" id="CHEBI:58359"/>
        <dbReference type="ChEBI" id="CHEBI:78520"/>
        <dbReference type="ChEBI" id="CHEBI:78521"/>
        <dbReference type="ChEBI" id="CHEBI:456216"/>
        <dbReference type="EC" id="6.3.5.7"/>
    </reaction>
</comment>
<comment type="subunit">
    <text evidence="1">Heterotrimer of A, B and C subunits.</text>
</comment>
<comment type="similarity">
    <text evidence="1">Belongs to the amidase family. GatA subfamily.</text>
</comment>
<organism>
    <name type="scientific">Jannaschia sp. (strain CCS1)</name>
    <dbReference type="NCBI Taxonomy" id="290400"/>
    <lineage>
        <taxon>Bacteria</taxon>
        <taxon>Pseudomonadati</taxon>
        <taxon>Pseudomonadota</taxon>
        <taxon>Alphaproteobacteria</taxon>
        <taxon>Rhodobacterales</taxon>
        <taxon>Roseobacteraceae</taxon>
        <taxon>Jannaschia</taxon>
    </lineage>
</organism>
<gene>
    <name evidence="1" type="primary">gatA</name>
    <name type="ordered locus">Jann_1221</name>
</gene>
<evidence type="ECO:0000255" key="1">
    <source>
        <dbReference type="HAMAP-Rule" id="MF_00120"/>
    </source>
</evidence>
<keyword id="KW-0067">ATP-binding</keyword>
<keyword id="KW-0436">Ligase</keyword>
<keyword id="KW-0547">Nucleotide-binding</keyword>
<keyword id="KW-0648">Protein biosynthesis</keyword>
<keyword id="KW-1185">Reference proteome</keyword>
<reference key="1">
    <citation type="submission" date="2006-02" db="EMBL/GenBank/DDBJ databases">
        <title>Complete sequence of chromosome of Jannaschia sp. CCS1.</title>
        <authorList>
            <consortium name="US DOE Joint Genome Institute"/>
            <person name="Copeland A."/>
            <person name="Lucas S."/>
            <person name="Lapidus A."/>
            <person name="Barry K."/>
            <person name="Detter J.C."/>
            <person name="Glavina del Rio T."/>
            <person name="Hammon N."/>
            <person name="Israni S."/>
            <person name="Pitluck S."/>
            <person name="Brettin T."/>
            <person name="Bruce D."/>
            <person name="Han C."/>
            <person name="Tapia R."/>
            <person name="Gilna P."/>
            <person name="Chertkov O."/>
            <person name="Saunders E."/>
            <person name="Schmutz J."/>
            <person name="Larimer F."/>
            <person name="Land M."/>
            <person name="Kyrpides N."/>
            <person name="Lykidis A."/>
            <person name="Moran M.A."/>
            <person name="Belas R."/>
            <person name="Ye W."/>
            <person name="Buchan A."/>
            <person name="Gonzalez J.M."/>
            <person name="Schell M.A."/>
            <person name="Richardson P."/>
        </authorList>
    </citation>
    <scope>NUCLEOTIDE SEQUENCE [LARGE SCALE GENOMIC DNA]</scope>
    <source>
        <strain>CCS1</strain>
    </source>
</reference>
<sequence length="494" mass="52224">MSDLNALTIADARDALRKGEVTSVDLTQACLSAIDQADALGTFVHKTPDLALERAKAADARIAEGDAPDMCGIPVGIKDLFCTEGVPSQAASRILDGFKPEYESTVSGKLRDAGAVMLGKLNMDEFAMGSSNETSVYGNAVNPWRAGNSDAALTPGGSSGGSASAVAGDLCLAATGTDTGGSIRQPAAFTGIVGLKPTYGRCSRWGIVAFASSLDQAGPMTKTVRDAAIMGRAMMGYDAKDSTSANIDVPDFEAMLTGDIRGKIIGIPKEYRMDGMPDEIETLWADGTAMLKDAGAVIRDISLPHTKYALPAYYVIAPAEASSNLARYDGVRFGYRADMAPGDGITEMYEKTRAEGFGPEVQRRVMIGTYVLSAGFYDAYYNRARRVRALIKRDFDEVFAAGVDAILTPATPSAAFELGKEVSDPVEMYLNDVFTVTVNLAGLPGVAVPTGVDRNGLPLGLQLIGKPWEEGELLNTAYALEAAAGFVAKPARWW</sequence>